<gene>
    <name evidence="1" type="primary">coaA</name>
    <name type="ordered locus">STY3740</name>
    <name type="ordered locus">t3487</name>
</gene>
<comment type="catalytic activity">
    <reaction evidence="1">
        <text>(R)-pantothenate + ATP = (R)-4'-phosphopantothenate + ADP + H(+)</text>
        <dbReference type="Rhea" id="RHEA:16373"/>
        <dbReference type="ChEBI" id="CHEBI:10986"/>
        <dbReference type="ChEBI" id="CHEBI:15378"/>
        <dbReference type="ChEBI" id="CHEBI:29032"/>
        <dbReference type="ChEBI" id="CHEBI:30616"/>
        <dbReference type="ChEBI" id="CHEBI:456216"/>
        <dbReference type="EC" id="2.7.1.33"/>
    </reaction>
</comment>
<comment type="pathway">
    <text evidence="1">Cofactor biosynthesis; coenzyme A biosynthesis; CoA from (R)-pantothenate: step 1/5.</text>
</comment>
<comment type="subcellular location">
    <subcellularLocation>
        <location evidence="1">Cytoplasm</location>
    </subcellularLocation>
</comment>
<comment type="similarity">
    <text evidence="1">Belongs to the prokaryotic pantothenate kinase family.</text>
</comment>
<sequence length="316" mass="36205">MSIKEQSLMTPYLQFDRSQWAALRDSVPMTLTEDEIAQLKGINEDLSLEEVAEIYLPLSRLLNFYISSNLRRQAVLEQFLGTNGQRIPYIISIAGSVAVGKSTTARVLQALLSRWPEHRRVELITTDGFLHPNQVLKERGLMKKKGFPESYDMHRLVKFVSDLKSGVPNVTAPVYSHLIYDVIPEGDKTVAQPDILILEGLNVLQSGMDYPHDPHHVFVSDFVDFSIYVDAPEELLQTWYINRFLKFREGAFTDPDSYFHNYAKLSKEEAVNTAASLWKEINWLNLKQNILPTRERASLIMTKSANHAVEQVRLRK</sequence>
<keyword id="KW-0067">ATP-binding</keyword>
<keyword id="KW-0173">Coenzyme A biosynthesis</keyword>
<keyword id="KW-0963">Cytoplasm</keyword>
<keyword id="KW-0418">Kinase</keyword>
<keyword id="KW-0547">Nucleotide-binding</keyword>
<keyword id="KW-0808">Transferase</keyword>
<dbReference type="EC" id="2.7.1.33" evidence="1"/>
<dbReference type="EMBL" id="AL513382">
    <property type="protein sequence ID" value="CAD09496.1"/>
    <property type="molecule type" value="Genomic_DNA"/>
</dbReference>
<dbReference type="EMBL" id="AE014613">
    <property type="protein sequence ID" value="AAO70999.1"/>
    <property type="molecule type" value="Genomic_DNA"/>
</dbReference>
<dbReference type="RefSeq" id="NP_457926.1">
    <property type="nucleotide sequence ID" value="NC_003198.1"/>
</dbReference>
<dbReference type="RefSeq" id="WP_000023068.1">
    <property type="nucleotide sequence ID" value="NZ_WSUR01000069.1"/>
</dbReference>
<dbReference type="SMR" id="Q8Z318"/>
<dbReference type="STRING" id="220341.gene:17587601"/>
<dbReference type="KEGG" id="stt:t3487"/>
<dbReference type="KEGG" id="sty:STY3740"/>
<dbReference type="PATRIC" id="fig|220341.7.peg.3815"/>
<dbReference type="eggNOG" id="COG1072">
    <property type="taxonomic scope" value="Bacteria"/>
</dbReference>
<dbReference type="HOGENOM" id="CLU_053818_1_1_6"/>
<dbReference type="OMA" id="MQRKGFP"/>
<dbReference type="OrthoDB" id="1550976at2"/>
<dbReference type="UniPathway" id="UPA00241">
    <property type="reaction ID" value="UER00352"/>
</dbReference>
<dbReference type="Proteomes" id="UP000000541">
    <property type="component" value="Chromosome"/>
</dbReference>
<dbReference type="Proteomes" id="UP000002670">
    <property type="component" value="Chromosome"/>
</dbReference>
<dbReference type="GO" id="GO:0005737">
    <property type="term" value="C:cytoplasm"/>
    <property type="evidence" value="ECO:0007669"/>
    <property type="project" value="UniProtKB-SubCell"/>
</dbReference>
<dbReference type="GO" id="GO:0005524">
    <property type="term" value="F:ATP binding"/>
    <property type="evidence" value="ECO:0007669"/>
    <property type="project" value="UniProtKB-UniRule"/>
</dbReference>
<dbReference type="GO" id="GO:0004594">
    <property type="term" value="F:pantothenate kinase activity"/>
    <property type="evidence" value="ECO:0007669"/>
    <property type="project" value="UniProtKB-UniRule"/>
</dbReference>
<dbReference type="GO" id="GO:0015937">
    <property type="term" value="P:coenzyme A biosynthetic process"/>
    <property type="evidence" value="ECO:0007669"/>
    <property type="project" value="UniProtKB-UniRule"/>
</dbReference>
<dbReference type="CDD" id="cd02025">
    <property type="entry name" value="PanK"/>
    <property type="match status" value="1"/>
</dbReference>
<dbReference type="FunFam" id="3.40.50.300:FF:000242">
    <property type="entry name" value="Pantothenate kinase"/>
    <property type="match status" value="1"/>
</dbReference>
<dbReference type="Gene3D" id="3.40.50.300">
    <property type="entry name" value="P-loop containing nucleotide triphosphate hydrolases"/>
    <property type="match status" value="1"/>
</dbReference>
<dbReference type="HAMAP" id="MF_00215">
    <property type="entry name" value="Pantothen_kinase_1"/>
    <property type="match status" value="1"/>
</dbReference>
<dbReference type="InterPro" id="IPR027417">
    <property type="entry name" value="P-loop_NTPase"/>
</dbReference>
<dbReference type="InterPro" id="IPR004566">
    <property type="entry name" value="PanK"/>
</dbReference>
<dbReference type="InterPro" id="IPR006083">
    <property type="entry name" value="PRK/URK"/>
</dbReference>
<dbReference type="NCBIfam" id="TIGR00554">
    <property type="entry name" value="panK_bact"/>
    <property type="match status" value="1"/>
</dbReference>
<dbReference type="PANTHER" id="PTHR10285">
    <property type="entry name" value="URIDINE KINASE"/>
    <property type="match status" value="1"/>
</dbReference>
<dbReference type="Pfam" id="PF00485">
    <property type="entry name" value="PRK"/>
    <property type="match status" value="1"/>
</dbReference>
<dbReference type="PIRSF" id="PIRSF000545">
    <property type="entry name" value="Pantothenate_kin"/>
    <property type="match status" value="1"/>
</dbReference>
<dbReference type="SUPFAM" id="SSF52540">
    <property type="entry name" value="P-loop containing nucleoside triphosphate hydrolases"/>
    <property type="match status" value="1"/>
</dbReference>
<feature type="chain" id="PRO_0000194445" description="Pantothenate kinase">
    <location>
        <begin position="1"/>
        <end position="316"/>
    </location>
</feature>
<feature type="binding site" evidence="1">
    <location>
        <begin position="95"/>
        <end position="102"/>
    </location>
    <ligand>
        <name>ATP</name>
        <dbReference type="ChEBI" id="CHEBI:30616"/>
    </ligand>
</feature>
<organism>
    <name type="scientific">Salmonella typhi</name>
    <dbReference type="NCBI Taxonomy" id="90370"/>
    <lineage>
        <taxon>Bacteria</taxon>
        <taxon>Pseudomonadati</taxon>
        <taxon>Pseudomonadota</taxon>
        <taxon>Gammaproteobacteria</taxon>
        <taxon>Enterobacterales</taxon>
        <taxon>Enterobacteriaceae</taxon>
        <taxon>Salmonella</taxon>
    </lineage>
</organism>
<protein>
    <recommendedName>
        <fullName evidence="1">Pantothenate kinase</fullName>
        <ecNumber evidence="1">2.7.1.33</ecNumber>
    </recommendedName>
    <alternativeName>
        <fullName evidence="1">Pantothenic acid kinase</fullName>
    </alternativeName>
</protein>
<name>COAA_SALTI</name>
<proteinExistence type="inferred from homology"/>
<reference key="1">
    <citation type="journal article" date="2001" name="Nature">
        <title>Complete genome sequence of a multiple drug resistant Salmonella enterica serovar Typhi CT18.</title>
        <authorList>
            <person name="Parkhill J."/>
            <person name="Dougan G."/>
            <person name="James K.D."/>
            <person name="Thomson N.R."/>
            <person name="Pickard D."/>
            <person name="Wain J."/>
            <person name="Churcher C.M."/>
            <person name="Mungall K.L."/>
            <person name="Bentley S.D."/>
            <person name="Holden M.T.G."/>
            <person name="Sebaihia M."/>
            <person name="Baker S."/>
            <person name="Basham D."/>
            <person name="Brooks K."/>
            <person name="Chillingworth T."/>
            <person name="Connerton P."/>
            <person name="Cronin A."/>
            <person name="Davis P."/>
            <person name="Davies R.M."/>
            <person name="Dowd L."/>
            <person name="White N."/>
            <person name="Farrar J."/>
            <person name="Feltwell T."/>
            <person name="Hamlin N."/>
            <person name="Haque A."/>
            <person name="Hien T.T."/>
            <person name="Holroyd S."/>
            <person name="Jagels K."/>
            <person name="Krogh A."/>
            <person name="Larsen T.S."/>
            <person name="Leather S."/>
            <person name="Moule S."/>
            <person name="O'Gaora P."/>
            <person name="Parry C."/>
            <person name="Quail M.A."/>
            <person name="Rutherford K.M."/>
            <person name="Simmonds M."/>
            <person name="Skelton J."/>
            <person name="Stevens K."/>
            <person name="Whitehead S."/>
            <person name="Barrell B.G."/>
        </authorList>
    </citation>
    <scope>NUCLEOTIDE SEQUENCE [LARGE SCALE GENOMIC DNA]</scope>
    <source>
        <strain>CT18</strain>
    </source>
</reference>
<reference key="2">
    <citation type="journal article" date="2003" name="J. Bacteriol.">
        <title>Comparative genomics of Salmonella enterica serovar Typhi strains Ty2 and CT18.</title>
        <authorList>
            <person name="Deng W."/>
            <person name="Liou S.-R."/>
            <person name="Plunkett G. III"/>
            <person name="Mayhew G.F."/>
            <person name="Rose D.J."/>
            <person name="Burland V."/>
            <person name="Kodoyianni V."/>
            <person name="Schwartz D.C."/>
            <person name="Blattner F.R."/>
        </authorList>
    </citation>
    <scope>NUCLEOTIDE SEQUENCE [LARGE SCALE GENOMIC DNA]</scope>
    <source>
        <strain>ATCC 700931 / Ty2</strain>
    </source>
</reference>
<accession>Q8Z318</accession>
<evidence type="ECO:0000255" key="1">
    <source>
        <dbReference type="HAMAP-Rule" id="MF_00215"/>
    </source>
</evidence>